<dbReference type="EC" id="3.1.-.-" evidence="1"/>
<dbReference type="EC" id="5.6.2.4" evidence="1"/>
<dbReference type="EMBL" id="CP000410">
    <property type="protein sequence ID" value="ABJ53740.1"/>
    <property type="molecule type" value="Genomic_DNA"/>
</dbReference>
<dbReference type="RefSeq" id="WP_000767212.1">
    <property type="nucleotide sequence ID" value="NZ_JAMLJR010000014.1"/>
</dbReference>
<dbReference type="SMR" id="Q04KF8"/>
<dbReference type="PaxDb" id="373153-SPD_1016"/>
<dbReference type="KEGG" id="spd:SPD_1016"/>
<dbReference type="eggNOG" id="COG1074">
    <property type="taxonomic scope" value="Bacteria"/>
</dbReference>
<dbReference type="HOGENOM" id="CLU_001114_3_1_9"/>
<dbReference type="BioCyc" id="SPNE373153:G1G6V-1104-MONOMER"/>
<dbReference type="Proteomes" id="UP000001452">
    <property type="component" value="Chromosome"/>
</dbReference>
<dbReference type="GO" id="GO:0005829">
    <property type="term" value="C:cytosol"/>
    <property type="evidence" value="ECO:0007669"/>
    <property type="project" value="TreeGrafter"/>
</dbReference>
<dbReference type="GO" id="GO:0033202">
    <property type="term" value="C:DNA helicase complex"/>
    <property type="evidence" value="ECO:0007669"/>
    <property type="project" value="TreeGrafter"/>
</dbReference>
<dbReference type="GO" id="GO:0043138">
    <property type="term" value="F:3'-5' DNA helicase activity"/>
    <property type="evidence" value="ECO:0007669"/>
    <property type="project" value="UniProtKB-UniRule"/>
</dbReference>
<dbReference type="GO" id="GO:0008408">
    <property type="term" value="F:3'-5' exonuclease activity"/>
    <property type="evidence" value="ECO:0007669"/>
    <property type="project" value="UniProtKB-UniRule"/>
</dbReference>
<dbReference type="GO" id="GO:0005524">
    <property type="term" value="F:ATP binding"/>
    <property type="evidence" value="ECO:0007669"/>
    <property type="project" value="UniProtKB-UniRule"/>
</dbReference>
<dbReference type="GO" id="GO:0016887">
    <property type="term" value="F:ATP hydrolysis activity"/>
    <property type="evidence" value="ECO:0007669"/>
    <property type="project" value="RHEA"/>
</dbReference>
<dbReference type="GO" id="GO:0003690">
    <property type="term" value="F:double-stranded DNA binding"/>
    <property type="evidence" value="ECO:0007669"/>
    <property type="project" value="UniProtKB-UniRule"/>
</dbReference>
<dbReference type="GO" id="GO:0000724">
    <property type="term" value="P:double-strand break repair via homologous recombination"/>
    <property type="evidence" value="ECO:0007669"/>
    <property type="project" value="UniProtKB-UniRule"/>
</dbReference>
<dbReference type="CDD" id="cd17932">
    <property type="entry name" value="DEXQc_UvrD"/>
    <property type="match status" value="1"/>
</dbReference>
<dbReference type="FunFam" id="3.40.50.300:FF:001196">
    <property type="entry name" value="ATP-dependent helicase/nuclease subunit A"/>
    <property type="match status" value="1"/>
</dbReference>
<dbReference type="FunFam" id="3.40.50.300:FF:002351">
    <property type="entry name" value="ATP-dependent helicase/nuclease subunit A"/>
    <property type="match status" value="1"/>
</dbReference>
<dbReference type="FunFam" id="3.40.50.300:FF:002570">
    <property type="entry name" value="ATP-dependent helicase/nuclease subunit A"/>
    <property type="match status" value="1"/>
</dbReference>
<dbReference type="Gene3D" id="3.90.320.10">
    <property type="match status" value="1"/>
</dbReference>
<dbReference type="Gene3D" id="3.40.50.300">
    <property type="entry name" value="P-loop containing nucleotide triphosphate hydrolases"/>
    <property type="match status" value="4"/>
</dbReference>
<dbReference type="Gene3D" id="1.10.486.10">
    <property type="entry name" value="PCRA, domain 4"/>
    <property type="match status" value="1"/>
</dbReference>
<dbReference type="HAMAP" id="MF_01451">
    <property type="entry name" value="AddA"/>
    <property type="match status" value="1"/>
</dbReference>
<dbReference type="InterPro" id="IPR014152">
    <property type="entry name" value="AddA"/>
</dbReference>
<dbReference type="InterPro" id="IPR014017">
    <property type="entry name" value="DNA_helicase_UvrD-like_C"/>
</dbReference>
<dbReference type="InterPro" id="IPR000212">
    <property type="entry name" value="DNA_helicase_UvrD/REP"/>
</dbReference>
<dbReference type="InterPro" id="IPR027417">
    <property type="entry name" value="P-loop_NTPase"/>
</dbReference>
<dbReference type="InterPro" id="IPR011604">
    <property type="entry name" value="PDDEXK-like_dom_sf"/>
</dbReference>
<dbReference type="InterPro" id="IPR038726">
    <property type="entry name" value="PDDEXK_AddAB-type"/>
</dbReference>
<dbReference type="InterPro" id="IPR011335">
    <property type="entry name" value="Restrct_endonuc-II-like"/>
</dbReference>
<dbReference type="InterPro" id="IPR014016">
    <property type="entry name" value="UvrD-like_ATP-bd"/>
</dbReference>
<dbReference type="NCBIfam" id="TIGR02785">
    <property type="entry name" value="addA_Gpos"/>
    <property type="match status" value="1"/>
</dbReference>
<dbReference type="PANTHER" id="PTHR11070:SF48">
    <property type="entry name" value="ATP-DEPENDENT HELICASE_NUCLEASE SUBUNIT A"/>
    <property type="match status" value="1"/>
</dbReference>
<dbReference type="PANTHER" id="PTHR11070">
    <property type="entry name" value="UVRD / RECB / PCRA DNA HELICASE FAMILY MEMBER"/>
    <property type="match status" value="1"/>
</dbReference>
<dbReference type="Pfam" id="PF12705">
    <property type="entry name" value="PDDEXK_1"/>
    <property type="match status" value="1"/>
</dbReference>
<dbReference type="Pfam" id="PF00580">
    <property type="entry name" value="UvrD-helicase"/>
    <property type="match status" value="1"/>
</dbReference>
<dbReference type="Pfam" id="PF13361">
    <property type="entry name" value="UvrD_C"/>
    <property type="match status" value="1"/>
</dbReference>
<dbReference type="SUPFAM" id="SSF52540">
    <property type="entry name" value="P-loop containing nucleoside triphosphate hydrolases"/>
    <property type="match status" value="1"/>
</dbReference>
<dbReference type="SUPFAM" id="SSF52980">
    <property type="entry name" value="Restriction endonuclease-like"/>
    <property type="match status" value="1"/>
</dbReference>
<dbReference type="PROSITE" id="PS51198">
    <property type="entry name" value="UVRD_HELICASE_ATP_BIND"/>
    <property type="match status" value="1"/>
</dbReference>
<dbReference type="PROSITE" id="PS51217">
    <property type="entry name" value="UVRD_HELICASE_CTER"/>
    <property type="match status" value="1"/>
</dbReference>
<name>ADDA_STRP2</name>
<accession>Q04KF8</accession>
<proteinExistence type="inferred from homology"/>
<reference key="1">
    <citation type="journal article" date="2007" name="J. Bacteriol.">
        <title>Genome sequence of Avery's virulent serotype 2 strain D39 of Streptococcus pneumoniae and comparison with that of unencapsulated laboratory strain R6.</title>
        <authorList>
            <person name="Lanie J.A."/>
            <person name="Ng W.-L."/>
            <person name="Kazmierczak K.M."/>
            <person name="Andrzejewski T.M."/>
            <person name="Davidsen T.M."/>
            <person name="Wayne K.J."/>
            <person name="Tettelin H."/>
            <person name="Glass J.I."/>
            <person name="Winkler M.E."/>
        </authorList>
    </citation>
    <scope>NUCLEOTIDE SEQUENCE [LARGE SCALE GENOMIC DNA]</scope>
    <source>
        <strain>D39 / NCTC 7466</strain>
    </source>
</reference>
<keyword id="KW-0067">ATP-binding</keyword>
<keyword id="KW-0227">DNA damage</keyword>
<keyword id="KW-0234">DNA repair</keyword>
<keyword id="KW-0238">DNA-binding</keyword>
<keyword id="KW-0269">Exonuclease</keyword>
<keyword id="KW-0347">Helicase</keyword>
<keyword id="KW-0378">Hydrolase</keyword>
<keyword id="KW-0413">Isomerase</keyword>
<keyword id="KW-0540">Nuclease</keyword>
<keyword id="KW-0547">Nucleotide-binding</keyword>
<keyword id="KW-1185">Reference proteome</keyword>
<gene>
    <name evidence="1" type="primary">addA</name>
    <name type="synonym">rexA</name>
    <name type="ordered locus">SPD_1016</name>
</gene>
<sequence>MKLIPFLSEEEIQKLQEAEANSSKEQKKTAEQIEAIYTSAQNILVSASAGSGKTFVMAERILDQLARGVEISQLFISTFTVKAATELKERLEKKISKKIQETDDVDLKQHLGRQLADLPNAAIGTMDSFTQKFLGKHGYLLDIAPNFRILQNQSEQLILENEVFHEVFEAHYQGKQKETFSHLLKNFAGRGKDERGLRQQVYKIYDFLQSTSNPQKWLSESFLKGFEKADFTSEKEKLTEQIKQALWDLESFFRYHLDNDAKEFAKAAYLENVQLILDEIGSLNQESDSQAYQAVLARVVAISKEKNGRALTNASRKADLKPLADAYNEERKTQFAKLGQLSDQIAILDYQERYHGDTWKLAKTFQSFMSDFVEAYRQRKRQENAFEFADISHYTIEILENFPQVRESYQERFHEVMVDEYQDTNHIQERMLELLSNGHNRFMVGDIKQSIYRFRQADPQIFNEKFQRYAQNPQEGRLIILKENFRSSSEVLSATNDVFERLMDQEVGEINYDNKHQLVFANTKLTPNPDNKAAFLLYDKDDTGEEEESQTETKLTGEMRLVIKEILKLHQEKGVAFKEIALLTSSRSRNDQILLALSEYGIPVKTDGEQNNYLQSLEVQVMLDTLRVIHNPLQDYALVALMKSPMFGFDEDELARLSLQKAEDKVHENLYEKLVNAQKMASSQKGLIHTALAEKLKQFMDILASWRLYAKTHSLYDLIWKIYNDRFYYDYVGALPNGPARQANLYALALRADQFEKSNFKGLSRFIRMIDQVLEAQHDLASVAVAPPKDAVELMTIHKSKGLEFPYVFILNMDQDFNKQDSMSEVILSRQNGLGVKYIAKMETGAVEDHYPKTIKLSIPSLTYRQNEEELQLASYSEQMRLLYVAMTRAEKKLYLVGKGSREKLESKEYPAAKNGKLNSNTRLQARNFQDWLWAISKVFTKDKLNFSYRFIGEDQLTREAIGELETKSPLQDSSQADNRQSDTIKEALEMLKEVEVYNTLHRAAIELPSVQTPSQIKKFYEPVMDMEGVEIAGQGQSVGKKISFDLPDFSTKEKVTGAEIGSATHELMQRIDLSQQLTLASLTETLKQVQTSQAVRDKINLDKILAFFDTVLGQEILANTDHLYREQPFSMLKRDQKSQEDFVVRGILDGYLLYENKIVLFDYKTDRYDEPSQLVDRYRGQLALYEEALSRAYSIENIEKYLILLGKDEVQVVKV</sequence>
<feature type="chain" id="PRO_0000379339" description="ATP-dependent helicase/nuclease subunit A">
    <location>
        <begin position="1"/>
        <end position="1216"/>
    </location>
</feature>
<feature type="domain" description="UvrD-like helicase ATP-binding" evidence="1">
    <location>
        <begin position="26"/>
        <end position="488"/>
    </location>
</feature>
<feature type="domain" description="UvrD-like helicase C-terminal" evidence="1">
    <location>
        <begin position="515"/>
        <end position="802"/>
    </location>
</feature>
<feature type="binding site" evidence="1">
    <location>
        <begin position="47"/>
        <end position="54"/>
    </location>
    <ligand>
        <name>ATP</name>
        <dbReference type="ChEBI" id="CHEBI:30616"/>
    </ligand>
</feature>
<comment type="function">
    <text evidence="1">The heterodimer acts as both an ATP-dependent DNA helicase and an ATP-dependent, dual-direction single-stranded exonuclease. Recognizes the chi site generating a DNA molecule suitable for the initiation of homologous recombination. The AddA nuclease domain is required for chi fragment generation; this subunit has the helicase and 3' -&gt; 5' nuclease activities.</text>
</comment>
<comment type="catalytic activity">
    <reaction evidence="1">
        <text>Couples ATP hydrolysis with the unwinding of duplex DNA by translocating in the 3'-5' direction.</text>
        <dbReference type="EC" id="5.6.2.4"/>
    </reaction>
</comment>
<comment type="catalytic activity">
    <reaction evidence="1">
        <text>ATP + H2O = ADP + phosphate + H(+)</text>
        <dbReference type="Rhea" id="RHEA:13065"/>
        <dbReference type="ChEBI" id="CHEBI:15377"/>
        <dbReference type="ChEBI" id="CHEBI:15378"/>
        <dbReference type="ChEBI" id="CHEBI:30616"/>
        <dbReference type="ChEBI" id="CHEBI:43474"/>
        <dbReference type="ChEBI" id="CHEBI:456216"/>
        <dbReference type="EC" id="5.6.2.4"/>
    </reaction>
</comment>
<comment type="cofactor">
    <cofactor evidence="1">
        <name>Mg(2+)</name>
        <dbReference type="ChEBI" id="CHEBI:18420"/>
    </cofactor>
</comment>
<comment type="subunit">
    <text evidence="1">Heterodimer of AddA and AddB/RexB.</text>
</comment>
<comment type="similarity">
    <text evidence="1">Belongs to the helicase family. AddA subfamily.</text>
</comment>
<evidence type="ECO:0000255" key="1">
    <source>
        <dbReference type="HAMAP-Rule" id="MF_01451"/>
    </source>
</evidence>
<protein>
    <recommendedName>
        <fullName evidence="1">ATP-dependent helicase/nuclease subunit A</fullName>
        <ecNumber evidence="1">3.1.-.-</ecNumber>
        <ecNumber evidence="1">5.6.2.4</ecNumber>
    </recommendedName>
    <alternativeName>
        <fullName evidence="1">ATP-dependent helicase/nuclease AddA</fullName>
    </alternativeName>
    <alternativeName>
        <fullName evidence="1">DNA 3'-5' helicase AddA</fullName>
    </alternativeName>
</protein>
<organism>
    <name type="scientific">Streptococcus pneumoniae serotype 2 (strain D39 / NCTC 7466)</name>
    <dbReference type="NCBI Taxonomy" id="373153"/>
    <lineage>
        <taxon>Bacteria</taxon>
        <taxon>Bacillati</taxon>
        <taxon>Bacillota</taxon>
        <taxon>Bacilli</taxon>
        <taxon>Lactobacillales</taxon>
        <taxon>Streptococcaceae</taxon>
        <taxon>Streptococcus</taxon>
    </lineage>
</organism>